<comment type="function">
    <text evidence="1">May function in the secretion of milk-fat droplets. May act as a specific membrane-associated receptor for the association of cytoplasmic droplets with the apical plasma membrane. Inhibits the proliferation of CD4 and CD8 T-cells activated by anti-CD3 antibodies, T-cell metabolism and IL2 and IFNG secretion (By similarity).</text>
</comment>
<comment type="subunit">
    <text evidence="1">Seems to associate with xanthine dehydrogenase/oxidase.</text>
</comment>
<comment type="subcellular location">
    <subcellularLocation>
        <location>Membrane</location>
        <topology>Single-pass type I membrane protein</topology>
    </subcellularLocation>
    <text evidence="1">Secreted in association with the milk-fat-globule membrane during lactation.</text>
</comment>
<comment type="tissue specificity">
    <text>Expressed in mammary tissue.</text>
</comment>
<comment type="similarity">
    <text evidence="7">Belongs to the immunoglobulin superfamily. BTN/MOG family.</text>
</comment>
<sequence length="526" mass="59277">MAVFPNSCLAGCLLIFILLQLPKLDSAPFDVIGPQEPILAVVGEDAELPCRLSPNVSAKGMELRWFREKVSPAVFVSREGQEQEGEEMAEYRGRVSLVEDHIAEGSVAVRIQEVKASDDGEYRCFFRQDENYEEAIVHLKVAALGSDPHISMKVQESGEIQLECTSVGWYPEPQVQWRTHRGEEFPSMSESRNPDEEGLFTVRASVIIRDSSMKNVSCCIRNLLLGQEKEVEVSIPASFFPRLTPWMVAVAVILVVLGLLTIGSIFFTWRLYKERSRQRRNEFSSKEKLLEELKWKRATLHAVDVTLDPDTAHPHLFLYEDSKSVRLEDSRQKLPEKPERFDSWPCVMGREAFTSGRHYWEVEVGDRTDWAIGVCRENVMKKGFDPMTPENGFWAVELYGNGYWALTPLRTPLPLAGPPRRVGVFLDYESGDIFFYNMTDGSHIYTFSKASFSGPLRPFFCLWSCGKKPLTICPVTDGLEGVMVVADAKDISKEIPLSPMGEDSASGDIETLHSKLIPLQPSQGVP</sequence>
<feature type="signal peptide" evidence="5">
    <location>
        <begin position="1"/>
        <end position="26"/>
    </location>
</feature>
<feature type="chain" id="PRO_0000014526" description="Butyrophilin subfamily 1 member A1">
    <location>
        <begin position="27"/>
        <end position="526"/>
    </location>
</feature>
<feature type="topological domain" description="Extracellular" evidence="2">
    <location>
        <begin position="27"/>
        <end position="242"/>
    </location>
</feature>
<feature type="transmembrane region" description="Helical" evidence="2">
    <location>
        <begin position="243"/>
        <end position="269"/>
    </location>
</feature>
<feature type="topological domain" description="Cytoplasmic" evidence="2">
    <location>
        <begin position="270"/>
        <end position="526"/>
    </location>
</feature>
<feature type="domain" description="Ig-like V-type 1">
    <location>
        <begin position="27"/>
        <end position="140"/>
    </location>
</feature>
<feature type="domain" description="Ig-like V-type 2">
    <location>
        <begin position="148"/>
        <end position="234"/>
    </location>
</feature>
<feature type="domain" description="B30.2/SPRY" evidence="4">
    <location>
        <begin position="285"/>
        <end position="479"/>
    </location>
</feature>
<feature type="glycosylation site" description="N-linked (GlcNAc...) (complex) asparagine" evidence="6">
    <location>
        <position position="55"/>
    </location>
</feature>
<feature type="glycosylation site" description="N-linked (GlcNAc...) (hybrid) asparagine" evidence="6">
    <location>
        <position position="215"/>
    </location>
</feature>
<feature type="disulfide bond" evidence="3">
    <location>
        <begin position="50"/>
        <end position="124"/>
    </location>
</feature>
<feature type="disulfide bond" evidence="3">
    <location>
        <begin position="164"/>
        <end position="218"/>
    </location>
</feature>
<feature type="sequence conflict" description="In Ref. 4; AAB92578." evidence="7" ref="4">
    <original>F</original>
    <variation>Y</variation>
    <location>
        <position position="16"/>
    </location>
</feature>
<feature type="sequence conflict" description="In Ref. 3; CAB07533." evidence="7" ref="3">
    <original>Q</original>
    <variation>P</variation>
    <location>
        <position position="35"/>
    </location>
</feature>
<feature type="sequence conflict" description="In Ref. 1 and 4." evidence="7" ref="1 4">
    <original>E</original>
    <variation>D</variation>
    <location>
        <position position="230"/>
    </location>
</feature>
<feature type="strand" evidence="8">
    <location>
        <begin position="30"/>
        <end position="32"/>
    </location>
</feature>
<feature type="strand" evidence="8">
    <location>
        <begin position="38"/>
        <end position="41"/>
    </location>
</feature>
<feature type="strand" evidence="8">
    <location>
        <begin position="46"/>
        <end position="54"/>
    </location>
</feature>
<feature type="strand" evidence="8">
    <location>
        <begin position="61"/>
        <end position="78"/>
    </location>
</feature>
<feature type="helix" evidence="8">
    <location>
        <begin position="84"/>
        <end position="86"/>
    </location>
</feature>
<feature type="turn" evidence="8">
    <location>
        <begin position="89"/>
        <end position="93"/>
    </location>
</feature>
<feature type="strand" evidence="8">
    <location>
        <begin position="94"/>
        <end position="101"/>
    </location>
</feature>
<feature type="helix" evidence="8">
    <location>
        <begin position="102"/>
        <end position="104"/>
    </location>
</feature>
<feature type="strand" evidence="8">
    <location>
        <begin position="106"/>
        <end position="111"/>
    </location>
</feature>
<feature type="helix" evidence="8">
    <location>
        <begin position="116"/>
        <end position="118"/>
    </location>
</feature>
<feature type="strand" evidence="8">
    <location>
        <begin position="120"/>
        <end position="128"/>
    </location>
</feature>
<feature type="strand" evidence="8">
    <location>
        <begin position="131"/>
        <end position="143"/>
    </location>
</feature>
<feature type="strand" evidence="8">
    <location>
        <begin position="149"/>
        <end position="154"/>
    </location>
</feature>
<feature type="helix" evidence="8">
    <location>
        <begin position="156"/>
        <end position="158"/>
    </location>
</feature>
<feature type="strand" evidence="8">
    <location>
        <begin position="160"/>
        <end position="171"/>
    </location>
</feature>
<feature type="strand" evidence="8">
    <location>
        <begin position="174"/>
        <end position="179"/>
    </location>
</feature>
<feature type="strand" evidence="8">
    <location>
        <begin position="188"/>
        <end position="194"/>
    </location>
</feature>
<feature type="strand" evidence="8">
    <location>
        <begin position="200"/>
        <end position="208"/>
    </location>
</feature>
<feature type="strand" evidence="8">
    <location>
        <begin position="215"/>
        <end position="222"/>
    </location>
</feature>
<feature type="turn" evidence="8">
    <location>
        <begin position="223"/>
        <end position="226"/>
    </location>
</feature>
<feature type="strand" evidence="8">
    <location>
        <begin position="227"/>
        <end position="234"/>
    </location>
</feature>
<accession>P18892</accession>
<accession>O18955</accession>
<accession>O18959</accession>
<accession>O46535</accession>
<accession>Q6RUS3</accession>
<gene>
    <name type="primary">BTN1A1</name>
    <name type="synonym">BTN</name>
</gene>
<evidence type="ECO:0000250" key="1"/>
<evidence type="ECO:0000255" key="2"/>
<evidence type="ECO:0000255" key="3">
    <source>
        <dbReference type="PROSITE-ProRule" id="PRU00114"/>
    </source>
</evidence>
<evidence type="ECO:0000255" key="4">
    <source>
        <dbReference type="PROSITE-ProRule" id="PRU00548"/>
    </source>
</evidence>
<evidence type="ECO:0000269" key="5">
    <source>
    </source>
</evidence>
<evidence type="ECO:0000269" key="6">
    <source>
    </source>
</evidence>
<evidence type="ECO:0000305" key="7"/>
<evidence type="ECO:0007829" key="8">
    <source>
        <dbReference type="PDB" id="4HH8"/>
    </source>
</evidence>
<proteinExistence type="evidence at protein level"/>
<protein>
    <recommendedName>
        <fullName>Butyrophilin subfamily 1 member A1</fullName>
        <shortName>BT</shortName>
    </recommendedName>
</protein>
<dbReference type="EMBL" id="M35551">
    <property type="protein sequence ID" value="AAB39766.1"/>
    <property type="molecule type" value="mRNA"/>
</dbReference>
<dbReference type="EMBL" id="AF005497">
    <property type="protein sequence ID" value="AAB62889.1"/>
    <property type="molecule type" value="Genomic_DNA"/>
</dbReference>
<dbReference type="EMBL" id="Z93323">
    <property type="protein sequence ID" value="CAB07533.1"/>
    <property type="molecule type" value="Genomic_DNA"/>
</dbReference>
<dbReference type="EMBL" id="AF037402">
    <property type="protein sequence ID" value="AAB92578.2"/>
    <property type="molecule type" value="Genomic_DNA"/>
</dbReference>
<dbReference type="EMBL" id="AY491469">
    <property type="protein sequence ID" value="AAR85488.1"/>
    <property type="molecule type" value="Genomic_DNA"/>
</dbReference>
<dbReference type="PIR" id="A37821">
    <property type="entry name" value="A37821"/>
</dbReference>
<dbReference type="RefSeq" id="NP_776933.1">
    <property type="nucleotide sequence ID" value="NM_174508.2"/>
</dbReference>
<dbReference type="RefSeq" id="XP_015315455.1">
    <property type="nucleotide sequence ID" value="XM_015459969.1"/>
</dbReference>
<dbReference type="RefSeq" id="XP_015324493.1">
    <property type="nucleotide sequence ID" value="XM_015469007.1"/>
</dbReference>
<dbReference type="PDB" id="4HH8">
    <property type="method" value="X-ray"/>
    <property type="resolution" value="2.30 A"/>
    <property type="chains" value="A=27-238"/>
</dbReference>
<dbReference type="PDBsum" id="4HH8"/>
<dbReference type="SMR" id="P18892"/>
<dbReference type="FunCoup" id="P18892">
    <property type="interactions" value="46"/>
</dbReference>
<dbReference type="STRING" id="9913.ENSBTAP00000042450"/>
<dbReference type="CarbonylDB" id="P18892"/>
<dbReference type="GlyCosmos" id="P18892">
    <property type="glycosylation" value="2 sites, No reported glycans"/>
</dbReference>
<dbReference type="GlyGen" id="P18892">
    <property type="glycosylation" value="2 sites"/>
</dbReference>
<dbReference type="iPTMnet" id="P18892"/>
<dbReference type="PaxDb" id="9913-ENSBTAP00000042450"/>
<dbReference type="PeptideAtlas" id="P18892"/>
<dbReference type="GeneID" id="282157"/>
<dbReference type="KEGG" id="bta:282157"/>
<dbReference type="CTD" id="696"/>
<dbReference type="eggNOG" id="ENOG502QSRZ">
    <property type="taxonomic scope" value="Eukaryota"/>
</dbReference>
<dbReference type="InParanoid" id="P18892"/>
<dbReference type="OrthoDB" id="6105938at2759"/>
<dbReference type="EvolutionaryTrace" id="P18892"/>
<dbReference type="Proteomes" id="UP000009136">
    <property type="component" value="Unplaced"/>
</dbReference>
<dbReference type="GO" id="GO:0009897">
    <property type="term" value="C:external side of plasma membrane"/>
    <property type="evidence" value="ECO:0000318"/>
    <property type="project" value="GO_Central"/>
</dbReference>
<dbReference type="GO" id="GO:0005102">
    <property type="term" value="F:signaling receptor binding"/>
    <property type="evidence" value="ECO:0000318"/>
    <property type="project" value="GO_Central"/>
</dbReference>
<dbReference type="GO" id="GO:0001817">
    <property type="term" value="P:regulation of cytokine production"/>
    <property type="evidence" value="ECO:0000318"/>
    <property type="project" value="GO_Central"/>
</dbReference>
<dbReference type="GO" id="GO:0050852">
    <property type="term" value="P:T cell receptor signaling pathway"/>
    <property type="evidence" value="ECO:0000318"/>
    <property type="project" value="GO_Central"/>
</dbReference>
<dbReference type="CDD" id="cd05713">
    <property type="entry name" value="IgV_MOG_like"/>
    <property type="match status" value="1"/>
</dbReference>
<dbReference type="CDD" id="cd15819">
    <property type="entry name" value="SPRY_PRY_BTN1_2"/>
    <property type="match status" value="1"/>
</dbReference>
<dbReference type="FunFam" id="2.60.120.920:FF:000004">
    <property type="entry name" value="Butyrophilin subfamily 1 member A1"/>
    <property type="match status" value="1"/>
</dbReference>
<dbReference type="FunFam" id="2.60.40.10:FF:000088">
    <property type="entry name" value="Butyrophilin subfamily 1 member A1"/>
    <property type="match status" value="1"/>
</dbReference>
<dbReference type="FunFam" id="2.60.40.10:FF:000208">
    <property type="entry name" value="Butyrophilin subfamily 1 member A1"/>
    <property type="match status" value="1"/>
</dbReference>
<dbReference type="Gene3D" id="2.60.120.920">
    <property type="match status" value="1"/>
</dbReference>
<dbReference type="Gene3D" id="2.60.40.10">
    <property type="entry name" value="Immunoglobulins"/>
    <property type="match status" value="2"/>
</dbReference>
<dbReference type="InterPro" id="IPR001870">
    <property type="entry name" value="B30.2/SPRY"/>
</dbReference>
<dbReference type="InterPro" id="IPR043136">
    <property type="entry name" value="B30.2/SPRY_sf"/>
</dbReference>
<dbReference type="InterPro" id="IPR053896">
    <property type="entry name" value="BTN3A2-like_Ig-C"/>
</dbReference>
<dbReference type="InterPro" id="IPR003879">
    <property type="entry name" value="Butyrophylin_SPRY"/>
</dbReference>
<dbReference type="InterPro" id="IPR013320">
    <property type="entry name" value="ConA-like_dom_sf"/>
</dbReference>
<dbReference type="InterPro" id="IPR007110">
    <property type="entry name" value="Ig-like_dom"/>
</dbReference>
<dbReference type="InterPro" id="IPR036179">
    <property type="entry name" value="Ig-like_dom_sf"/>
</dbReference>
<dbReference type="InterPro" id="IPR013783">
    <property type="entry name" value="Ig-like_fold"/>
</dbReference>
<dbReference type="InterPro" id="IPR003599">
    <property type="entry name" value="Ig_sub"/>
</dbReference>
<dbReference type="InterPro" id="IPR013106">
    <property type="entry name" value="Ig_V-set"/>
</dbReference>
<dbReference type="InterPro" id="IPR050504">
    <property type="entry name" value="IgSF_BTN/MOG"/>
</dbReference>
<dbReference type="InterPro" id="IPR006574">
    <property type="entry name" value="PRY"/>
</dbReference>
<dbReference type="InterPro" id="IPR037958">
    <property type="entry name" value="SPRY/PRY_BTN1/2"/>
</dbReference>
<dbReference type="InterPro" id="IPR003877">
    <property type="entry name" value="SPRY_dom"/>
</dbReference>
<dbReference type="PANTHER" id="PTHR24100">
    <property type="entry name" value="BUTYROPHILIN"/>
    <property type="match status" value="1"/>
</dbReference>
<dbReference type="PANTHER" id="PTHR24100:SF138">
    <property type="entry name" value="BUTYROPHILIN SUBFAMILY 1 MEMBER A1"/>
    <property type="match status" value="1"/>
</dbReference>
<dbReference type="Pfam" id="PF22705">
    <property type="entry name" value="C2-set_3"/>
    <property type="match status" value="1"/>
</dbReference>
<dbReference type="Pfam" id="PF13765">
    <property type="entry name" value="PRY"/>
    <property type="match status" value="1"/>
</dbReference>
<dbReference type="Pfam" id="PF00622">
    <property type="entry name" value="SPRY"/>
    <property type="match status" value="1"/>
</dbReference>
<dbReference type="Pfam" id="PF07686">
    <property type="entry name" value="V-set"/>
    <property type="match status" value="1"/>
</dbReference>
<dbReference type="PRINTS" id="PR01407">
    <property type="entry name" value="BUTYPHLNCDUF"/>
</dbReference>
<dbReference type="SMART" id="SM00409">
    <property type="entry name" value="IG"/>
    <property type="match status" value="1"/>
</dbReference>
<dbReference type="SMART" id="SM00406">
    <property type="entry name" value="IGv"/>
    <property type="match status" value="1"/>
</dbReference>
<dbReference type="SMART" id="SM00589">
    <property type="entry name" value="PRY"/>
    <property type="match status" value="1"/>
</dbReference>
<dbReference type="SMART" id="SM00449">
    <property type="entry name" value="SPRY"/>
    <property type="match status" value="1"/>
</dbReference>
<dbReference type="SUPFAM" id="SSF49899">
    <property type="entry name" value="Concanavalin A-like lectins/glucanases"/>
    <property type="match status" value="1"/>
</dbReference>
<dbReference type="SUPFAM" id="SSF48726">
    <property type="entry name" value="Immunoglobulin"/>
    <property type="match status" value="2"/>
</dbReference>
<dbReference type="PROSITE" id="PS50188">
    <property type="entry name" value="B302_SPRY"/>
    <property type="match status" value="1"/>
</dbReference>
<dbReference type="PROSITE" id="PS50835">
    <property type="entry name" value="IG_LIKE"/>
    <property type="match status" value="2"/>
</dbReference>
<keyword id="KW-0002">3D-structure</keyword>
<keyword id="KW-0903">Direct protein sequencing</keyword>
<keyword id="KW-1015">Disulfide bond</keyword>
<keyword id="KW-0325">Glycoprotein</keyword>
<keyword id="KW-0393">Immunoglobulin domain</keyword>
<keyword id="KW-0472">Membrane</keyword>
<keyword id="KW-1185">Reference proteome</keyword>
<keyword id="KW-0677">Repeat</keyword>
<keyword id="KW-0732">Signal</keyword>
<keyword id="KW-0812">Transmembrane</keyword>
<keyword id="KW-1133">Transmembrane helix</keyword>
<organism>
    <name type="scientific">Bos taurus</name>
    <name type="common">Bovine</name>
    <dbReference type="NCBI Taxonomy" id="9913"/>
    <lineage>
        <taxon>Eukaryota</taxon>
        <taxon>Metazoa</taxon>
        <taxon>Chordata</taxon>
        <taxon>Craniata</taxon>
        <taxon>Vertebrata</taxon>
        <taxon>Euteleostomi</taxon>
        <taxon>Mammalia</taxon>
        <taxon>Eutheria</taxon>
        <taxon>Laurasiatheria</taxon>
        <taxon>Artiodactyla</taxon>
        <taxon>Ruminantia</taxon>
        <taxon>Pecora</taxon>
        <taxon>Bovidae</taxon>
        <taxon>Bovinae</taxon>
        <taxon>Bos</taxon>
    </lineage>
</organism>
<name>BT1A1_BOVIN</name>
<reference key="1">
    <citation type="journal article" date="1990" name="J. Biol. Chem.">
        <title>Cloning and analysis of cDNA encoding bovine butyrophilin, an apical glycoprotein expressed in mammary tissue and secreted in association with the milk-fat globule membrane during lactation.</title>
        <authorList>
            <person name="Jack L.J.W."/>
            <person name="Mather I.H."/>
        </authorList>
    </citation>
    <scope>NUCLEOTIDE SEQUENCE [MRNA]</scope>
    <scope>PROTEIN SEQUENCE OF 27-47</scope>
</reference>
<reference key="2">
    <citation type="submission" date="1997-05" db="EMBL/GenBank/DDBJ databases">
        <authorList>
            <person name="Davey H.W."/>
            <person name="Ogg S.L."/>
            <person name="Husaini Y."/>
            <person name="Snell R.G."/>
            <person name="Korobko I.V."/>
            <person name="Mather I.H."/>
            <person name="Wilkins R.J."/>
        </authorList>
    </citation>
    <scope>NUCLEOTIDE SEQUENCE [GENOMIC DNA]</scope>
    <source>
        <strain>Holstein-Friesian</strain>
    </source>
</reference>
<reference key="3">
    <citation type="submission" date="1997-03" db="EMBL/GenBank/DDBJ databases">
        <authorList>
            <person name="Seyfert H.-M."/>
            <person name="Luethen F."/>
        </authorList>
    </citation>
    <scope>NUCLEOTIDE SEQUENCE [GENOMIC DNA]</scope>
    <source>
        <tissue>Blood</tissue>
    </source>
</reference>
<reference key="4">
    <citation type="submission" date="1997-12" db="EMBL/GenBank/DDBJ databases">
        <title>Identification of five allelic polymorphisms in the bovine butyrophilin gene.</title>
        <authorList>
            <person name="Husaini Y."/>
            <person name="Wilkins R.J."/>
            <person name="Davey H.W."/>
        </authorList>
    </citation>
    <scope>NUCLEOTIDE SEQUENCE [GENOMIC DNA] OF 1-286</scope>
</reference>
<reference key="5">
    <citation type="submission" date="2003-12" db="EMBL/GenBank/DDBJ databases">
        <authorList>
            <person name="Bhattacharya T.K."/>
            <person name="Misra S.S."/>
            <person name="Sheikh F.D."/>
            <person name="Dayal S."/>
            <person name="Vohra V."/>
            <person name="Kumar P."/>
            <person name="Sharma A."/>
        </authorList>
    </citation>
    <scope>NUCLEOTIDE SEQUENCE [GENOMIC DNA] OF 397-526</scope>
    <source>
        <tissue>Blood</tissue>
    </source>
</reference>
<reference key="6">
    <citation type="journal article" date="1995" name="J. Biochem.">
        <title>Site-specific glycosylation of bovine butyrophilin.</title>
        <authorList>
            <person name="Sato T."/>
            <person name="Takio K."/>
            <person name="Kobata A."/>
            <person name="Greenwalt D.E."/>
            <person name="Furukawa K."/>
        </authorList>
    </citation>
    <scope>GLYCOSYLATION AT ASN-55 AND ASN-215</scope>
</reference>